<name>YIDD_STAAC</name>
<protein>
    <recommendedName>
        <fullName evidence="1">Putative membrane protein insertion efficiency factor</fullName>
    </recommendedName>
</protein>
<keyword id="KW-1003">Cell membrane</keyword>
<keyword id="KW-0472">Membrane</keyword>
<comment type="function">
    <text evidence="1">Could be involved in insertion of integral membrane proteins into the membrane.</text>
</comment>
<comment type="subcellular location">
    <subcellularLocation>
        <location evidence="1">Cell membrane</location>
        <topology evidence="1">Peripheral membrane protein</topology>
        <orientation evidence="1">Cytoplasmic side</orientation>
    </subcellularLocation>
</comment>
<comment type="similarity">
    <text evidence="1">Belongs to the UPF0161 family.</text>
</comment>
<accession>Q5HEY4</accession>
<dbReference type="EMBL" id="CP000046">
    <property type="protein sequence ID" value="AAW36860.1"/>
    <property type="molecule type" value="Genomic_DNA"/>
</dbReference>
<dbReference type="KEGG" id="sac:SACOL1842"/>
<dbReference type="HOGENOM" id="CLU_144811_6_0_9"/>
<dbReference type="Proteomes" id="UP000000530">
    <property type="component" value="Chromosome"/>
</dbReference>
<dbReference type="GO" id="GO:0005886">
    <property type="term" value="C:plasma membrane"/>
    <property type="evidence" value="ECO:0007669"/>
    <property type="project" value="UniProtKB-SubCell"/>
</dbReference>
<dbReference type="HAMAP" id="MF_00386">
    <property type="entry name" value="UPF0161_YidD"/>
    <property type="match status" value="1"/>
</dbReference>
<dbReference type="InterPro" id="IPR002696">
    <property type="entry name" value="Membr_insert_effic_factor_YidD"/>
</dbReference>
<dbReference type="NCBIfam" id="TIGR00278">
    <property type="entry name" value="membrane protein insertion efficiency factor YidD"/>
    <property type="match status" value="1"/>
</dbReference>
<dbReference type="PANTHER" id="PTHR33383">
    <property type="entry name" value="MEMBRANE PROTEIN INSERTION EFFICIENCY FACTOR-RELATED"/>
    <property type="match status" value="1"/>
</dbReference>
<dbReference type="PANTHER" id="PTHR33383:SF1">
    <property type="entry name" value="MEMBRANE PROTEIN INSERTION EFFICIENCY FACTOR-RELATED"/>
    <property type="match status" value="1"/>
</dbReference>
<dbReference type="Pfam" id="PF01809">
    <property type="entry name" value="YidD"/>
    <property type="match status" value="1"/>
</dbReference>
<dbReference type="SMART" id="SM01234">
    <property type="entry name" value="Haemolytic"/>
    <property type="match status" value="1"/>
</dbReference>
<sequence>MKKIFLAMIHFYQRFISPLTPPTCRFYPTCSEYTREAIQYHGAFKGLYLGIRRILKCHPLHKGGFDPVPLKKDKSASKHSHKHNH</sequence>
<evidence type="ECO:0000255" key="1">
    <source>
        <dbReference type="HAMAP-Rule" id="MF_00386"/>
    </source>
</evidence>
<evidence type="ECO:0000256" key="2">
    <source>
        <dbReference type="SAM" id="MobiDB-lite"/>
    </source>
</evidence>
<feature type="chain" id="PRO_0000171866" description="Putative membrane protein insertion efficiency factor">
    <location>
        <begin position="1"/>
        <end position="85"/>
    </location>
</feature>
<feature type="region of interest" description="Disordered" evidence="2">
    <location>
        <begin position="62"/>
        <end position="85"/>
    </location>
</feature>
<gene>
    <name type="ordered locus">SACOL1842</name>
</gene>
<proteinExistence type="inferred from homology"/>
<organism>
    <name type="scientific">Staphylococcus aureus (strain COL)</name>
    <dbReference type="NCBI Taxonomy" id="93062"/>
    <lineage>
        <taxon>Bacteria</taxon>
        <taxon>Bacillati</taxon>
        <taxon>Bacillota</taxon>
        <taxon>Bacilli</taxon>
        <taxon>Bacillales</taxon>
        <taxon>Staphylococcaceae</taxon>
        <taxon>Staphylococcus</taxon>
    </lineage>
</organism>
<reference key="1">
    <citation type="journal article" date="2005" name="J. Bacteriol.">
        <title>Insights on evolution of virulence and resistance from the complete genome analysis of an early methicillin-resistant Staphylococcus aureus strain and a biofilm-producing methicillin-resistant Staphylococcus epidermidis strain.</title>
        <authorList>
            <person name="Gill S.R."/>
            <person name="Fouts D.E."/>
            <person name="Archer G.L."/>
            <person name="Mongodin E.F."/>
            <person name="DeBoy R.T."/>
            <person name="Ravel J."/>
            <person name="Paulsen I.T."/>
            <person name="Kolonay J.F."/>
            <person name="Brinkac L.M."/>
            <person name="Beanan M.J."/>
            <person name="Dodson R.J."/>
            <person name="Daugherty S.C."/>
            <person name="Madupu R."/>
            <person name="Angiuoli S.V."/>
            <person name="Durkin A.S."/>
            <person name="Haft D.H."/>
            <person name="Vamathevan J.J."/>
            <person name="Khouri H."/>
            <person name="Utterback T.R."/>
            <person name="Lee C."/>
            <person name="Dimitrov G."/>
            <person name="Jiang L."/>
            <person name="Qin H."/>
            <person name="Weidman J."/>
            <person name="Tran K."/>
            <person name="Kang K.H."/>
            <person name="Hance I.R."/>
            <person name="Nelson K.E."/>
            <person name="Fraser C.M."/>
        </authorList>
    </citation>
    <scope>NUCLEOTIDE SEQUENCE [LARGE SCALE GENOMIC DNA]</scope>
    <source>
        <strain>COL</strain>
    </source>
</reference>